<keyword id="KW-0067">ATP-binding</keyword>
<keyword id="KW-0436">Ligase</keyword>
<keyword id="KW-0479">Metal-binding</keyword>
<keyword id="KW-0547">Nucleotide-binding</keyword>
<keyword id="KW-0862">Zinc</keyword>
<reference key="1">
    <citation type="journal article" date="2007" name="Proc. Natl. Acad. Sci. U.S.A.">
        <title>Genomic and metabolic adaptations of Methanobrevibacter smithii to the human gut.</title>
        <authorList>
            <person name="Samuel B.S."/>
            <person name="Hansen E.E."/>
            <person name="Manchester J.K."/>
            <person name="Coutinho P.M."/>
            <person name="Henrissat B."/>
            <person name="Fulton R."/>
            <person name="Latreille P."/>
            <person name="Kim K."/>
            <person name="Wilson R.K."/>
            <person name="Gordon J.I."/>
        </authorList>
    </citation>
    <scope>NUCLEOTIDE SEQUENCE [LARGE SCALE GENOMIC DNA]</scope>
    <source>
        <strain>ATCC 35061 / DSM 861 / OCM 144 / PS</strain>
    </source>
</reference>
<proteinExistence type="inferred from homology"/>
<name>QUEC_METS3</name>
<comment type="function">
    <text evidence="1">Catalyzes the ATP-dependent conversion of 7-carboxy-7-deazaguanine (CDG) to 7-cyano-7-deazaguanine (preQ(0)).</text>
</comment>
<comment type="catalytic activity">
    <reaction evidence="1">
        <text>7-carboxy-7-deazaguanine + NH4(+) + ATP = 7-cyano-7-deazaguanine + ADP + phosphate + H2O + H(+)</text>
        <dbReference type="Rhea" id="RHEA:27982"/>
        <dbReference type="ChEBI" id="CHEBI:15377"/>
        <dbReference type="ChEBI" id="CHEBI:15378"/>
        <dbReference type="ChEBI" id="CHEBI:28938"/>
        <dbReference type="ChEBI" id="CHEBI:30616"/>
        <dbReference type="ChEBI" id="CHEBI:43474"/>
        <dbReference type="ChEBI" id="CHEBI:45075"/>
        <dbReference type="ChEBI" id="CHEBI:61036"/>
        <dbReference type="ChEBI" id="CHEBI:456216"/>
        <dbReference type="EC" id="6.3.4.20"/>
    </reaction>
</comment>
<comment type="cofactor">
    <cofactor evidence="1">
        <name>Zn(2+)</name>
        <dbReference type="ChEBI" id="CHEBI:29105"/>
    </cofactor>
    <text evidence="1">Binds 1 zinc ion per subunit.</text>
</comment>
<comment type="pathway">
    <text evidence="1">Purine metabolism; 7-cyano-7-deazaguanine biosynthesis.</text>
</comment>
<comment type="similarity">
    <text evidence="1">Belongs to the QueC family.</text>
</comment>
<feature type="chain" id="PRO_1000069781" description="7-cyano-7-deazaguanine synthase">
    <location>
        <begin position="1"/>
        <end position="227"/>
    </location>
</feature>
<feature type="binding site" evidence="1">
    <location>
        <begin position="10"/>
        <end position="20"/>
    </location>
    <ligand>
        <name>ATP</name>
        <dbReference type="ChEBI" id="CHEBI:30616"/>
    </ligand>
</feature>
<feature type="binding site" evidence="1">
    <location>
        <position position="193"/>
    </location>
    <ligand>
        <name>Zn(2+)</name>
        <dbReference type="ChEBI" id="CHEBI:29105"/>
    </ligand>
</feature>
<feature type="binding site" evidence="1">
    <location>
        <position position="201"/>
    </location>
    <ligand>
        <name>Zn(2+)</name>
        <dbReference type="ChEBI" id="CHEBI:29105"/>
    </ligand>
</feature>
<feature type="binding site" evidence="1">
    <location>
        <position position="204"/>
    </location>
    <ligand>
        <name>Zn(2+)</name>
        <dbReference type="ChEBI" id="CHEBI:29105"/>
    </ligand>
</feature>
<feature type="binding site" evidence="1">
    <location>
        <position position="207"/>
    </location>
    <ligand>
        <name>Zn(2+)</name>
        <dbReference type="ChEBI" id="CHEBI:29105"/>
    </ligand>
</feature>
<evidence type="ECO:0000255" key="1">
    <source>
        <dbReference type="HAMAP-Rule" id="MF_01633"/>
    </source>
</evidence>
<dbReference type="EC" id="6.3.4.20" evidence="1"/>
<dbReference type="EMBL" id="CP000678">
    <property type="protein sequence ID" value="ABQ87141.1"/>
    <property type="molecule type" value="Genomic_DNA"/>
</dbReference>
<dbReference type="RefSeq" id="WP_011954187.1">
    <property type="nucleotide sequence ID" value="NZ_CP117965.1"/>
</dbReference>
<dbReference type="SMR" id="A5ULR3"/>
<dbReference type="STRING" id="420247.Msm_0936"/>
<dbReference type="EnsemblBacteria" id="ABQ87141">
    <property type="protein sequence ID" value="ABQ87141"/>
    <property type="gene ID" value="Msm_0936"/>
</dbReference>
<dbReference type="GeneID" id="78817576"/>
<dbReference type="KEGG" id="msi:Msm_0936"/>
<dbReference type="PATRIC" id="fig|420247.28.peg.932"/>
<dbReference type="eggNOG" id="arCOG00039">
    <property type="taxonomic scope" value="Archaea"/>
</dbReference>
<dbReference type="HOGENOM" id="CLU_081854_1_0_2"/>
<dbReference type="UniPathway" id="UPA00391"/>
<dbReference type="Proteomes" id="UP000001992">
    <property type="component" value="Chromosome"/>
</dbReference>
<dbReference type="GO" id="GO:0005524">
    <property type="term" value="F:ATP binding"/>
    <property type="evidence" value="ECO:0007669"/>
    <property type="project" value="UniProtKB-UniRule"/>
</dbReference>
<dbReference type="GO" id="GO:0016879">
    <property type="term" value="F:ligase activity, forming carbon-nitrogen bonds"/>
    <property type="evidence" value="ECO:0007669"/>
    <property type="project" value="UniProtKB-UniRule"/>
</dbReference>
<dbReference type="GO" id="GO:0008270">
    <property type="term" value="F:zinc ion binding"/>
    <property type="evidence" value="ECO:0007669"/>
    <property type="project" value="UniProtKB-UniRule"/>
</dbReference>
<dbReference type="CDD" id="cd01995">
    <property type="entry name" value="QueC-like"/>
    <property type="match status" value="1"/>
</dbReference>
<dbReference type="Gene3D" id="3.40.50.620">
    <property type="entry name" value="HUPs"/>
    <property type="match status" value="1"/>
</dbReference>
<dbReference type="HAMAP" id="MF_01633">
    <property type="entry name" value="QueC"/>
    <property type="match status" value="1"/>
</dbReference>
<dbReference type="InterPro" id="IPR018317">
    <property type="entry name" value="QueC"/>
</dbReference>
<dbReference type="InterPro" id="IPR014729">
    <property type="entry name" value="Rossmann-like_a/b/a_fold"/>
</dbReference>
<dbReference type="NCBIfam" id="TIGR00364">
    <property type="entry name" value="7-cyano-7-deazaguanine synthase QueC"/>
    <property type="match status" value="1"/>
</dbReference>
<dbReference type="PANTHER" id="PTHR42914">
    <property type="entry name" value="7-CYANO-7-DEAZAGUANINE SYNTHASE"/>
    <property type="match status" value="1"/>
</dbReference>
<dbReference type="PANTHER" id="PTHR42914:SF1">
    <property type="entry name" value="7-CYANO-7-DEAZAGUANINE SYNTHASE"/>
    <property type="match status" value="1"/>
</dbReference>
<dbReference type="Pfam" id="PF06508">
    <property type="entry name" value="QueC"/>
    <property type="match status" value="1"/>
</dbReference>
<dbReference type="PIRSF" id="PIRSF006293">
    <property type="entry name" value="ExsB"/>
    <property type="match status" value="1"/>
</dbReference>
<dbReference type="SUPFAM" id="SSF52402">
    <property type="entry name" value="Adenine nucleotide alpha hydrolases-like"/>
    <property type="match status" value="1"/>
</dbReference>
<gene>
    <name evidence="1" type="primary">queC</name>
    <name type="ordered locus">Msm_0936</name>
</gene>
<sequence length="227" mass="25326">MMTKKAITVLSGGLDSCVATCVYAEDYEIHGITFNYGQKSFKQELKASEEICKKMGFTHEVIDLPWLNKISNSSLTSDNEIPTLTHEELDDLDICEDTASSVWVPGRNIVFTSIATSYAESIGAEIIIVGWDKEEAATFPDNSKEFLESFNNMLNVGSPQNIEIKAPAIDLNKDEIVKLGDEIKAPMELSYSCYTGHEKHCGVCESCMRRKRAFKLADVKDPSEYNE</sequence>
<organism>
    <name type="scientific">Methanobrevibacter smithii (strain ATCC 35061 / DSM 861 / OCM 144 / PS)</name>
    <dbReference type="NCBI Taxonomy" id="420247"/>
    <lineage>
        <taxon>Archaea</taxon>
        <taxon>Methanobacteriati</taxon>
        <taxon>Methanobacteriota</taxon>
        <taxon>Methanomada group</taxon>
        <taxon>Methanobacteria</taxon>
        <taxon>Methanobacteriales</taxon>
        <taxon>Methanobacteriaceae</taxon>
        <taxon>Methanobrevibacter</taxon>
    </lineage>
</organism>
<accession>A5ULR3</accession>
<protein>
    <recommendedName>
        <fullName evidence="1">7-cyano-7-deazaguanine synthase</fullName>
        <ecNumber evidence="1">6.3.4.20</ecNumber>
    </recommendedName>
    <alternativeName>
        <fullName evidence="1">7-cyano-7-carbaguanine synthase</fullName>
    </alternativeName>
    <alternativeName>
        <fullName evidence="1">Archaeosine biosynthesis protein QueC</fullName>
    </alternativeName>
    <alternativeName>
        <fullName evidence="1">PreQ(0) synthase</fullName>
    </alternativeName>
</protein>